<name>HMX3_XENLA</name>
<accession>Q8JJ64</accession>
<accession>A9JS82</accession>
<gene>
    <name type="primary">hmx3</name>
    <name type="synonym">nkx-5.1</name>
    <name type="synonym">nkx5-1</name>
</gene>
<sequence>MPETGQESSNPPAKESPFSIKSLLTCEPSRAARPPKALFTPIKGALDGAAFAFSPLTDFTFPRLEIPTQRFALPAHYLERSPGWWYSYTLAHGGHTPRTEVPDKSLLLGPTSPVSGGERDSPDPIHPLKTELGAKESESKSPEEIILEESDPEEGKKDDSGEDWKKREDSPDKKPCRKKKTRTVFSRSQVFQLESTFDMKRYLSSSERAGLAASLHLTETQVKIWFQNRRNKWKRQLAAELEAANLSHAAAQRIVRVPILYHENSSSAESASSAANVPVSQPLLTFPHPVYYSHPVVTSVPLLRPV</sequence>
<reference key="1">
    <citation type="journal article" date="2004" name="Mech. Dev.">
        <title>The homeodomain-containing transcription factor X-nkx-5.1 inhibits expression of the homeobox gene Xanf-1 during the Xenopus laevis forebrain development.</title>
        <authorList>
            <person name="Bayramov A.V."/>
            <person name="Martynova N.Y."/>
            <person name="Eroshkin F.M."/>
            <person name="Ermakova G.V."/>
            <person name="Zaraisky A.G."/>
        </authorList>
    </citation>
    <scope>NUCLEOTIDE SEQUENCE [MRNA]</scope>
    <scope>DNA-BINDING</scope>
    <scope>FUNCTION</scope>
    <scope>DEVELOPMENTAL STAGE</scope>
</reference>
<reference key="2">
    <citation type="submission" date="2007-12" db="EMBL/GenBank/DDBJ databases">
        <authorList>
            <consortium name="NIH - Xenopus Gene Collection (XGC) project"/>
        </authorList>
    </citation>
    <scope>NUCLEOTIDE SEQUENCE [LARGE SCALE MRNA] OF 147-306</scope>
    <source>
        <tissue>Embryo</tissue>
    </source>
</reference>
<evidence type="ECO:0000250" key="1"/>
<evidence type="ECO:0000255" key="2">
    <source>
        <dbReference type="PROSITE-ProRule" id="PRU00108"/>
    </source>
</evidence>
<evidence type="ECO:0000256" key="3">
    <source>
        <dbReference type="SAM" id="MobiDB-lite"/>
    </source>
</evidence>
<evidence type="ECO:0000269" key="4">
    <source>
    </source>
</evidence>
<evidence type="ECO:0000305" key="5"/>
<protein>
    <recommendedName>
        <fullName>Homeobox protein HMX3</fullName>
    </recommendedName>
    <alternativeName>
        <fullName>Homeobox protein H6 family member 3</fullName>
    </alternativeName>
    <alternativeName>
        <fullName>Homeobox protein Nkx-5.1</fullName>
        <shortName>X-nkx-5.1</shortName>
    </alternativeName>
</protein>
<feature type="chain" id="PRO_0000341387" description="Homeobox protein HMX3">
    <location>
        <begin position="1"/>
        <end position="306"/>
    </location>
</feature>
<feature type="DNA-binding region" description="Homeobox" evidence="2">
    <location>
        <begin position="178"/>
        <end position="237"/>
    </location>
</feature>
<feature type="region of interest" description="Disordered" evidence="3">
    <location>
        <begin position="95"/>
        <end position="181"/>
    </location>
</feature>
<feature type="compositionally biased region" description="Basic and acidic residues" evidence="3">
    <location>
        <begin position="117"/>
        <end position="143"/>
    </location>
</feature>
<feature type="compositionally biased region" description="Basic and acidic residues" evidence="3">
    <location>
        <begin position="153"/>
        <end position="174"/>
    </location>
</feature>
<comment type="function">
    <text evidence="1 4">Transcription factor involved in specification of neuronal cell types and which is required for inner ear and hypothalamus development. Binds to the 5'-CAAGTG-3' core sequence (By similarity). May act as a stage-specific inhibitor of anf1 in the anterior neural plate during the development.</text>
</comment>
<comment type="subcellular location">
    <subcellularLocation>
        <location evidence="2">Nucleus</location>
    </subcellularLocation>
</comment>
<comment type="developmental stage">
    <text evidence="4">Expressed in the embryonic brain and in the ciliated cells of the otic and lateral line placodes. Also expressed in precursors of the epidermal ciliated cells. Expressed early in the anterior neural plate starts early.</text>
</comment>
<comment type="similarity">
    <text evidence="5">Belongs to the HMX homeobox family.</text>
</comment>
<keyword id="KW-0217">Developmental protein</keyword>
<keyword id="KW-0221">Differentiation</keyword>
<keyword id="KW-0238">DNA-binding</keyword>
<keyword id="KW-0371">Homeobox</keyword>
<keyword id="KW-0524">Neurogenesis</keyword>
<keyword id="KW-0539">Nucleus</keyword>
<keyword id="KW-1185">Reference proteome</keyword>
<keyword id="KW-0804">Transcription</keyword>
<keyword id="KW-0805">Transcription regulation</keyword>
<dbReference type="EMBL" id="AF368235">
    <property type="protein sequence ID" value="AAM21210.1"/>
    <property type="molecule type" value="mRNA"/>
</dbReference>
<dbReference type="EMBL" id="BC155953">
    <property type="protein sequence ID" value="AAI55954.1"/>
    <property type="molecule type" value="mRNA"/>
</dbReference>
<dbReference type="RefSeq" id="NP_001079226.1">
    <property type="nucleotide sequence ID" value="NM_001085757.1"/>
</dbReference>
<dbReference type="SMR" id="Q8JJ64"/>
<dbReference type="GeneID" id="373845"/>
<dbReference type="KEGG" id="xla:373845"/>
<dbReference type="AGR" id="Xenbase:XB-GENE-865014"/>
<dbReference type="CTD" id="373845"/>
<dbReference type="Xenbase" id="XB-GENE-865014">
    <property type="gene designation" value="hmx3.L"/>
</dbReference>
<dbReference type="OMA" id="DKKPACR"/>
<dbReference type="OrthoDB" id="6159439at2759"/>
<dbReference type="Proteomes" id="UP000186698">
    <property type="component" value="Chromosome 7L"/>
</dbReference>
<dbReference type="Bgee" id="373845">
    <property type="expression patterns" value="Expressed in internal ear and 5 other cell types or tissues"/>
</dbReference>
<dbReference type="GO" id="GO:0005634">
    <property type="term" value="C:nucleus"/>
    <property type="evidence" value="ECO:0000318"/>
    <property type="project" value="GO_Central"/>
</dbReference>
<dbReference type="GO" id="GO:0000981">
    <property type="term" value="F:DNA-binding transcription factor activity, RNA polymerase II-specific"/>
    <property type="evidence" value="ECO:0000318"/>
    <property type="project" value="GO_Central"/>
</dbReference>
<dbReference type="GO" id="GO:0000977">
    <property type="term" value="F:RNA polymerase II transcription regulatory region sequence-specific DNA binding"/>
    <property type="evidence" value="ECO:0000318"/>
    <property type="project" value="GO_Central"/>
</dbReference>
<dbReference type="GO" id="GO:0030154">
    <property type="term" value="P:cell differentiation"/>
    <property type="evidence" value="ECO:0007669"/>
    <property type="project" value="UniProtKB-KW"/>
</dbReference>
<dbReference type="GO" id="GO:0007399">
    <property type="term" value="P:nervous system development"/>
    <property type="evidence" value="ECO:0007669"/>
    <property type="project" value="UniProtKB-KW"/>
</dbReference>
<dbReference type="GO" id="GO:0006357">
    <property type="term" value="P:regulation of transcription by RNA polymerase II"/>
    <property type="evidence" value="ECO:0000318"/>
    <property type="project" value="GO_Central"/>
</dbReference>
<dbReference type="CDD" id="cd00086">
    <property type="entry name" value="homeodomain"/>
    <property type="match status" value="1"/>
</dbReference>
<dbReference type="FunFam" id="1.10.10.60:FF:000053">
    <property type="entry name" value="H6 family homeobox 2"/>
    <property type="match status" value="1"/>
</dbReference>
<dbReference type="Gene3D" id="1.10.10.60">
    <property type="entry name" value="Homeodomain-like"/>
    <property type="match status" value="1"/>
</dbReference>
<dbReference type="InterPro" id="IPR001356">
    <property type="entry name" value="HD"/>
</dbReference>
<dbReference type="InterPro" id="IPR020479">
    <property type="entry name" value="HD_metazoa"/>
</dbReference>
<dbReference type="InterPro" id="IPR051300">
    <property type="entry name" value="HMX_Homeobox_TF"/>
</dbReference>
<dbReference type="InterPro" id="IPR017970">
    <property type="entry name" value="Homeobox_CS"/>
</dbReference>
<dbReference type="InterPro" id="IPR009057">
    <property type="entry name" value="Homeodomain-like_sf"/>
</dbReference>
<dbReference type="PANTHER" id="PTHR46110">
    <property type="entry name" value="HOMEOBOX PROTEIN HMX"/>
    <property type="match status" value="1"/>
</dbReference>
<dbReference type="PANTHER" id="PTHR46110:SF2">
    <property type="entry name" value="HOMEOBOX PROTEIN HMX3"/>
    <property type="match status" value="1"/>
</dbReference>
<dbReference type="Pfam" id="PF00046">
    <property type="entry name" value="Homeodomain"/>
    <property type="match status" value="1"/>
</dbReference>
<dbReference type="PRINTS" id="PR00024">
    <property type="entry name" value="HOMEOBOX"/>
</dbReference>
<dbReference type="SMART" id="SM00389">
    <property type="entry name" value="HOX"/>
    <property type="match status" value="1"/>
</dbReference>
<dbReference type="SUPFAM" id="SSF46689">
    <property type="entry name" value="Homeodomain-like"/>
    <property type="match status" value="1"/>
</dbReference>
<dbReference type="PROSITE" id="PS00027">
    <property type="entry name" value="HOMEOBOX_1"/>
    <property type="match status" value="1"/>
</dbReference>
<dbReference type="PROSITE" id="PS50071">
    <property type="entry name" value="HOMEOBOX_2"/>
    <property type="match status" value="1"/>
</dbReference>
<proteinExistence type="evidence at protein level"/>
<organism>
    <name type="scientific">Xenopus laevis</name>
    <name type="common">African clawed frog</name>
    <dbReference type="NCBI Taxonomy" id="8355"/>
    <lineage>
        <taxon>Eukaryota</taxon>
        <taxon>Metazoa</taxon>
        <taxon>Chordata</taxon>
        <taxon>Craniata</taxon>
        <taxon>Vertebrata</taxon>
        <taxon>Euteleostomi</taxon>
        <taxon>Amphibia</taxon>
        <taxon>Batrachia</taxon>
        <taxon>Anura</taxon>
        <taxon>Pipoidea</taxon>
        <taxon>Pipidae</taxon>
        <taxon>Xenopodinae</taxon>
        <taxon>Xenopus</taxon>
        <taxon>Xenopus</taxon>
    </lineage>
</organism>